<sequence>MKKSITTLDLNLLLCLQLLMQERSVTKAAKRINVTPSAVSKSLAKLRAWFDDPLFVNSPLGLSPTPLMVSMEQNLAEWMQMSNLLLDKPHHQTPRGLKFELAAESPLMMIMLNALSKQIYQRYPQATIKLRNWDYDSLDAITRGEVDIGFSGRESHPRSRELLSSLPLAIDYEVLFSDVPCVWLRKDHPALHQTWNLDTFLRYPHISICWEQSDTWALDNVLQELGRERTIAMSLPEFEQSLFMAAQPDNLLLATAPRYCQYYNQLHQLPLVALPLPFDESQQKKLEVPFTLLWHKRNSHNPKIVWLRETIKNLYASMA</sequence>
<reference key="1">
    <citation type="journal article" date="2009" name="J. Bacteriol.">
        <title>Genomic sequencing reveals regulatory mutations and recombinational events in the widely used MC4100 lineage of Escherichia coli K-12.</title>
        <authorList>
            <person name="Ferenci T."/>
            <person name="Zhou Z."/>
            <person name="Betteridge T."/>
            <person name="Ren Y."/>
            <person name="Liu Y."/>
            <person name="Feng L."/>
            <person name="Reeves P.R."/>
            <person name="Wang L."/>
        </authorList>
    </citation>
    <scope>NUCLEOTIDE SEQUENCE [LARGE SCALE GENOMIC DNA]</scope>
    <source>
        <strain>K12 / MC4100 / BW2952</strain>
    </source>
</reference>
<gene>
    <name evidence="1" type="primary">yidZ</name>
    <name type="ordered locus">BWG_3402</name>
</gene>
<comment type="function">
    <text evidence="1">Involved in anaerobic NO protection.</text>
</comment>
<comment type="similarity">
    <text evidence="2">Belongs to the LysR transcriptional regulatory family.</text>
</comment>
<feature type="chain" id="PRO_1000215701" description="HTH-type transcriptional regulator YidZ">
    <location>
        <begin position="1"/>
        <end position="319"/>
    </location>
</feature>
<feature type="domain" description="HTH lysR-type" evidence="1">
    <location>
        <begin position="8"/>
        <end position="65"/>
    </location>
</feature>
<feature type="DNA-binding region" description="H-T-H motif" evidence="1">
    <location>
        <begin position="25"/>
        <end position="44"/>
    </location>
</feature>
<proteinExistence type="inferred from homology"/>
<name>YIDZ_ECOBW</name>
<organism>
    <name type="scientific">Escherichia coli (strain K12 / MC4100 / BW2952)</name>
    <dbReference type="NCBI Taxonomy" id="595496"/>
    <lineage>
        <taxon>Bacteria</taxon>
        <taxon>Pseudomonadati</taxon>
        <taxon>Pseudomonadota</taxon>
        <taxon>Gammaproteobacteria</taxon>
        <taxon>Enterobacterales</taxon>
        <taxon>Enterobacteriaceae</taxon>
        <taxon>Escherichia</taxon>
    </lineage>
</organism>
<accession>C4ZYY9</accession>
<dbReference type="EMBL" id="CP001396">
    <property type="protein sequence ID" value="ACR64323.1"/>
    <property type="molecule type" value="Genomic_DNA"/>
</dbReference>
<dbReference type="RefSeq" id="WP_001311238.1">
    <property type="nucleotide sequence ID" value="NC_012759.1"/>
</dbReference>
<dbReference type="SMR" id="C4ZYY9"/>
<dbReference type="KEGG" id="ebw:BWG_3402"/>
<dbReference type="HOGENOM" id="CLU_039613_39_2_6"/>
<dbReference type="GO" id="GO:0003677">
    <property type="term" value="F:DNA binding"/>
    <property type="evidence" value="ECO:0007669"/>
    <property type="project" value="UniProtKB-KW"/>
</dbReference>
<dbReference type="GO" id="GO:0003700">
    <property type="term" value="F:DNA-binding transcription factor activity"/>
    <property type="evidence" value="ECO:0007669"/>
    <property type="project" value="UniProtKB-UniRule"/>
</dbReference>
<dbReference type="CDD" id="cd08417">
    <property type="entry name" value="PBP2_Nitroaromatics_like"/>
    <property type="match status" value="1"/>
</dbReference>
<dbReference type="FunFam" id="3.40.190.10:FF:000092">
    <property type="entry name" value="HTH-type transcriptional regulator YidZ"/>
    <property type="match status" value="1"/>
</dbReference>
<dbReference type="Gene3D" id="3.40.190.10">
    <property type="entry name" value="Periplasmic binding protein-like II"/>
    <property type="match status" value="2"/>
</dbReference>
<dbReference type="Gene3D" id="1.10.10.10">
    <property type="entry name" value="Winged helix-like DNA-binding domain superfamily/Winged helix DNA-binding domain"/>
    <property type="match status" value="1"/>
</dbReference>
<dbReference type="HAMAP" id="MF_01607">
    <property type="entry name" value="HTH_type_YidZ"/>
    <property type="match status" value="1"/>
</dbReference>
<dbReference type="InterPro" id="IPR050389">
    <property type="entry name" value="LysR-type_TF"/>
</dbReference>
<dbReference type="InterPro" id="IPR005119">
    <property type="entry name" value="LysR_subst-bd"/>
</dbReference>
<dbReference type="InterPro" id="IPR000847">
    <property type="entry name" value="Tscrpt_reg_HTH_LysR"/>
</dbReference>
<dbReference type="InterPro" id="IPR023746">
    <property type="entry name" value="Tscrpt_reg_YidZ"/>
</dbReference>
<dbReference type="InterPro" id="IPR036388">
    <property type="entry name" value="WH-like_DNA-bd_sf"/>
</dbReference>
<dbReference type="InterPro" id="IPR036390">
    <property type="entry name" value="WH_DNA-bd_sf"/>
</dbReference>
<dbReference type="InterPro" id="IPR037402">
    <property type="entry name" value="YidZ_PBP2"/>
</dbReference>
<dbReference type="NCBIfam" id="NF007581">
    <property type="entry name" value="PRK10216.1"/>
    <property type="match status" value="1"/>
</dbReference>
<dbReference type="PANTHER" id="PTHR30118">
    <property type="entry name" value="HTH-TYPE TRANSCRIPTIONAL REGULATOR LEUO-RELATED"/>
    <property type="match status" value="1"/>
</dbReference>
<dbReference type="PANTHER" id="PTHR30118:SF11">
    <property type="entry name" value="HTH-TYPE TRANSCRIPTIONAL REGULATOR YIDZ"/>
    <property type="match status" value="1"/>
</dbReference>
<dbReference type="Pfam" id="PF00126">
    <property type="entry name" value="HTH_1"/>
    <property type="match status" value="1"/>
</dbReference>
<dbReference type="Pfam" id="PF03466">
    <property type="entry name" value="LysR_substrate"/>
    <property type="match status" value="1"/>
</dbReference>
<dbReference type="SUPFAM" id="SSF53850">
    <property type="entry name" value="Periplasmic binding protein-like II"/>
    <property type="match status" value="1"/>
</dbReference>
<dbReference type="SUPFAM" id="SSF46785">
    <property type="entry name" value="Winged helix' DNA-binding domain"/>
    <property type="match status" value="1"/>
</dbReference>
<dbReference type="PROSITE" id="PS50931">
    <property type="entry name" value="HTH_LYSR"/>
    <property type="match status" value="1"/>
</dbReference>
<evidence type="ECO:0000255" key="1">
    <source>
        <dbReference type="HAMAP-Rule" id="MF_01607"/>
    </source>
</evidence>
<evidence type="ECO:0000305" key="2"/>
<protein>
    <recommendedName>
        <fullName evidence="1">HTH-type transcriptional regulator YidZ</fullName>
    </recommendedName>
</protein>
<keyword id="KW-0238">DNA-binding</keyword>
<keyword id="KW-0804">Transcription</keyword>
<keyword id="KW-0805">Transcription regulation</keyword>